<name>5HT5A_RAT</name>
<accession>P35364</accession>
<feature type="chain" id="PRO_0000068971" description="5-hydroxytryptamine receptor 5A">
    <location>
        <begin position="1"/>
        <end position="357"/>
    </location>
</feature>
<feature type="topological domain" description="Extracellular" evidence="1">
    <location>
        <begin position="1"/>
        <end position="36"/>
    </location>
</feature>
<feature type="transmembrane region" description="Helical; Name=1" evidence="1">
    <location>
        <begin position="37"/>
        <end position="63"/>
    </location>
</feature>
<feature type="topological domain" description="Cytoplasmic" evidence="1">
    <location>
        <begin position="64"/>
        <end position="76"/>
    </location>
</feature>
<feature type="transmembrane region" description="Helical; Name=2" evidence="1">
    <location>
        <begin position="77"/>
        <end position="103"/>
    </location>
</feature>
<feature type="topological domain" description="Extracellular" evidence="1">
    <location>
        <begin position="104"/>
        <end position="114"/>
    </location>
</feature>
<feature type="transmembrane region" description="Helical; Name=3" evidence="1">
    <location>
        <begin position="115"/>
        <end position="137"/>
    </location>
</feature>
<feature type="topological domain" description="Cytoplasmic" evidence="1">
    <location>
        <begin position="138"/>
        <end position="155"/>
    </location>
</feature>
<feature type="transmembrane region" description="Helical; Name=4" evidence="1">
    <location>
        <begin position="156"/>
        <end position="176"/>
    </location>
</feature>
<feature type="topological domain" description="Extracellular" evidence="1">
    <location>
        <begin position="177"/>
        <end position="198"/>
    </location>
</feature>
<feature type="transmembrane region" description="Helical; Name=5" evidence="1">
    <location>
        <begin position="199"/>
        <end position="220"/>
    </location>
</feature>
<feature type="topological domain" description="Cytoplasmic" evidence="1">
    <location>
        <begin position="221"/>
        <end position="287"/>
    </location>
</feature>
<feature type="transmembrane region" description="Helical; Name=6" evidence="1">
    <location>
        <begin position="288"/>
        <end position="312"/>
    </location>
</feature>
<feature type="topological domain" description="Extracellular" evidence="1">
    <location>
        <begin position="313"/>
        <end position="314"/>
    </location>
</feature>
<feature type="transmembrane region" description="Helical; Name=7" evidence="1">
    <location>
        <begin position="315"/>
        <end position="339"/>
    </location>
</feature>
<feature type="topological domain" description="Cytoplasmic" evidence="1">
    <location>
        <begin position="340"/>
        <end position="357"/>
    </location>
</feature>
<feature type="binding site" evidence="1">
    <location>
        <position position="121"/>
    </location>
    <ligand>
        <name>serotonin</name>
        <dbReference type="ChEBI" id="CHEBI:350546"/>
    </ligand>
</feature>
<feature type="glycosylation site" description="N-linked (GlcNAc...) asparagine" evidence="2">
    <location>
        <position position="6"/>
    </location>
</feature>
<feature type="glycosylation site" description="N-linked (GlcNAc...) asparagine" evidence="2">
    <location>
        <position position="21"/>
    </location>
</feature>
<feature type="disulfide bond" evidence="3">
    <location>
        <begin position="114"/>
        <end position="192"/>
    </location>
</feature>
<organism>
    <name type="scientific">Rattus norvegicus</name>
    <name type="common">Rat</name>
    <dbReference type="NCBI Taxonomy" id="10116"/>
    <lineage>
        <taxon>Eukaryota</taxon>
        <taxon>Metazoa</taxon>
        <taxon>Chordata</taxon>
        <taxon>Craniata</taxon>
        <taxon>Vertebrata</taxon>
        <taxon>Euteleostomi</taxon>
        <taxon>Mammalia</taxon>
        <taxon>Eutheria</taxon>
        <taxon>Euarchontoglires</taxon>
        <taxon>Glires</taxon>
        <taxon>Rodentia</taxon>
        <taxon>Myomorpha</taxon>
        <taxon>Muroidea</taxon>
        <taxon>Muridae</taxon>
        <taxon>Murinae</taxon>
        <taxon>Rattus</taxon>
    </lineage>
</organism>
<comment type="function">
    <text evidence="1 4">G-protein coupled receptor for 5-hydroxytryptamine (serotonin), a biogenic hormone that functions as a neurotransmitter, a hormone and a mitogen (PubMed:7682702). Also functions as a receptor for ergot alkaloid derivatives and other psychoactive substances (By similarity). Ligand binding causes a conformation change that triggers signaling via guanine nucleotide-binding proteins (G proteins) and modulates the activity of downstream effectors (By similarity). Htr5a is coupled to G(i)/G(o) G alpha proteins and mediates inhibitory neurotransmission: signaling inhibits adenylate cyclase activity and activates a phosphatidylinositol-calcium second messenger system that regulates the release of Ca(2+) ions from intracellular stores (By similarity).</text>
</comment>
<comment type="subcellular location">
    <subcellularLocation>
        <location evidence="1">Cell membrane</location>
        <topology evidence="2">Multi-pass membrane protein</topology>
    </subcellularLocation>
</comment>
<comment type="tissue specificity">
    <text evidence="4">Central nervous system.</text>
</comment>
<comment type="similarity">
    <text evidence="3">Belongs to the G-protein coupled receptor 1 family.</text>
</comment>
<keyword id="KW-1003">Cell membrane</keyword>
<keyword id="KW-1015">Disulfide bond</keyword>
<keyword id="KW-0297">G-protein coupled receptor</keyword>
<keyword id="KW-0325">Glycoprotein</keyword>
<keyword id="KW-0472">Membrane</keyword>
<keyword id="KW-0675">Receptor</keyword>
<keyword id="KW-1185">Reference proteome</keyword>
<keyword id="KW-0807">Transducer</keyword>
<keyword id="KW-0812">Transmembrane</keyword>
<keyword id="KW-1133">Transmembrane helix</keyword>
<dbReference type="EMBL" id="L10072">
    <property type="protein sequence ID" value="AAA40615.1"/>
    <property type="molecule type" value="mRNA"/>
</dbReference>
<dbReference type="PIR" id="B47472">
    <property type="entry name" value="B47472"/>
</dbReference>
<dbReference type="RefSeq" id="NP_037280.1">
    <property type="nucleotide sequence ID" value="NM_013148.2"/>
</dbReference>
<dbReference type="SMR" id="P35364"/>
<dbReference type="FunCoup" id="P35364">
    <property type="interactions" value="136"/>
</dbReference>
<dbReference type="STRING" id="10116.ENSRNOP00000009317"/>
<dbReference type="BindingDB" id="P35364"/>
<dbReference type="ChEMBL" id="CHEMBL4655"/>
<dbReference type="DrugCentral" id="P35364"/>
<dbReference type="GuidetoPHARMACOLOGY" id="10"/>
<dbReference type="GlyCosmos" id="P35364">
    <property type="glycosylation" value="2 sites, No reported glycans"/>
</dbReference>
<dbReference type="GlyGen" id="P35364">
    <property type="glycosylation" value="2 sites"/>
</dbReference>
<dbReference type="PhosphoSitePlus" id="P35364"/>
<dbReference type="PaxDb" id="10116-ENSRNOP00000009317"/>
<dbReference type="Ensembl" id="ENSRNOT00000009317.3">
    <property type="protein sequence ID" value="ENSRNOP00000009317.1"/>
    <property type="gene ID" value="ENSRNOG00000007066.3"/>
</dbReference>
<dbReference type="GeneID" id="25689"/>
<dbReference type="KEGG" id="rno:25689"/>
<dbReference type="AGR" id="RGD:2851"/>
<dbReference type="CTD" id="3361"/>
<dbReference type="RGD" id="2851">
    <property type="gene designation" value="Htr5a"/>
</dbReference>
<dbReference type="eggNOG" id="KOG3656">
    <property type="taxonomic scope" value="Eukaryota"/>
</dbReference>
<dbReference type="GeneTree" id="ENSGT01010000222287"/>
<dbReference type="HOGENOM" id="CLU_009579_11_6_1"/>
<dbReference type="InParanoid" id="P35364"/>
<dbReference type="OMA" id="PAVWKSI"/>
<dbReference type="OrthoDB" id="5957871at2759"/>
<dbReference type="PhylomeDB" id="P35364"/>
<dbReference type="TreeFam" id="TF316350"/>
<dbReference type="Reactome" id="R-RNO-390666">
    <property type="pathway name" value="Serotonin receptors"/>
</dbReference>
<dbReference type="Reactome" id="R-RNO-418594">
    <property type="pathway name" value="G alpha (i) signalling events"/>
</dbReference>
<dbReference type="PRO" id="PR:P35364"/>
<dbReference type="Proteomes" id="UP000002494">
    <property type="component" value="Chromosome 4"/>
</dbReference>
<dbReference type="Bgee" id="ENSRNOG00000007066">
    <property type="expression patterns" value="Expressed in frontal cortex and 1 other cell type or tissue"/>
</dbReference>
<dbReference type="GO" id="GO:0030425">
    <property type="term" value="C:dendrite"/>
    <property type="evidence" value="ECO:0000314"/>
    <property type="project" value="RGD"/>
</dbReference>
<dbReference type="GO" id="GO:0043204">
    <property type="term" value="C:perikaryon"/>
    <property type="evidence" value="ECO:0000314"/>
    <property type="project" value="RGD"/>
</dbReference>
<dbReference type="GO" id="GO:0005886">
    <property type="term" value="C:plasma membrane"/>
    <property type="evidence" value="ECO:0000250"/>
    <property type="project" value="UniProtKB"/>
</dbReference>
<dbReference type="GO" id="GO:0099634">
    <property type="term" value="C:postsynaptic specialization membrane"/>
    <property type="evidence" value="ECO:0000314"/>
    <property type="project" value="SynGO"/>
</dbReference>
<dbReference type="GO" id="GO:0004993">
    <property type="term" value="F:G protein-coupled serotonin receptor activity"/>
    <property type="evidence" value="ECO:0000315"/>
    <property type="project" value="RGD"/>
</dbReference>
<dbReference type="GO" id="GO:0001586">
    <property type="term" value="F:Gi/o-coupled serotonin receptor activity"/>
    <property type="evidence" value="ECO:0000250"/>
    <property type="project" value="UniProtKB"/>
</dbReference>
<dbReference type="GO" id="GO:0030594">
    <property type="term" value="F:neurotransmitter receptor activity"/>
    <property type="evidence" value="ECO:0000318"/>
    <property type="project" value="GO_Central"/>
</dbReference>
<dbReference type="GO" id="GO:0099589">
    <property type="term" value="F:serotonin receptor activity"/>
    <property type="evidence" value="ECO:0000266"/>
    <property type="project" value="RGD"/>
</dbReference>
<dbReference type="GO" id="GO:0007189">
    <property type="term" value="P:adenylate cyclase-activating G protein-coupled receptor signaling pathway"/>
    <property type="evidence" value="ECO:0000266"/>
    <property type="project" value="RGD"/>
</dbReference>
<dbReference type="GO" id="GO:0007198">
    <property type="term" value="P:adenylate cyclase-inhibiting serotonin receptor signaling pathway"/>
    <property type="evidence" value="ECO:0000250"/>
    <property type="project" value="UniProtKB"/>
</dbReference>
<dbReference type="GO" id="GO:0007268">
    <property type="term" value="P:chemical synaptic transmission"/>
    <property type="evidence" value="ECO:0000318"/>
    <property type="project" value="GO_Central"/>
</dbReference>
<dbReference type="GO" id="GO:0007187">
    <property type="term" value="P:G protein-coupled receptor signaling pathway, coupled to cyclic nucleotide second messenger"/>
    <property type="evidence" value="ECO:0000315"/>
    <property type="project" value="RGD"/>
</dbReference>
<dbReference type="GO" id="GO:0021766">
    <property type="term" value="P:hippocampus development"/>
    <property type="evidence" value="ECO:0000270"/>
    <property type="project" value="RGD"/>
</dbReference>
<dbReference type="GO" id="GO:0032355">
    <property type="term" value="P:response to estradiol"/>
    <property type="evidence" value="ECO:0000270"/>
    <property type="project" value="RGD"/>
</dbReference>
<dbReference type="FunFam" id="1.20.1070.10:FF:000089">
    <property type="entry name" value="5-hydroxytryptamine receptor 5A"/>
    <property type="match status" value="1"/>
</dbReference>
<dbReference type="Gene3D" id="1.20.1070.10">
    <property type="entry name" value="Rhodopsin 7-helix transmembrane proteins"/>
    <property type="match status" value="1"/>
</dbReference>
<dbReference type="InterPro" id="IPR001397">
    <property type="entry name" value="5HT5A_rcpt"/>
</dbReference>
<dbReference type="InterPro" id="IPR002231">
    <property type="entry name" value="5HT_rcpt"/>
</dbReference>
<dbReference type="InterPro" id="IPR000276">
    <property type="entry name" value="GPCR_Rhodpsn"/>
</dbReference>
<dbReference type="InterPro" id="IPR017452">
    <property type="entry name" value="GPCR_Rhodpsn_7TM"/>
</dbReference>
<dbReference type="PANTHER" id="PTHR24248:SF202">
    <property type="entry name" value="5-HYDROXYTRYPTAMINE RECEPTOR 5A"/>
    <property type="match status" value="1"/>
</dbReference>
<dbReference type="PANTHER" id="PTHR24248">
    <property type="entry name" value="ADRENERGIC RECEPTOR-RELATED G-PROTEIN COUPLED RECEPTOR"/>
    <property type="match status" value="1"/>
</dbReference>
<dbReference type="Pfam" id="PF00001">
    <property type="entry name" value="7tm_1"/>
    <property type="match status" value="1"/>
</dbReference>
<dbReference type="PRINTS" id="PR00518">
    <property type="entry name" value="5HT5ARECEPTR"/>
</dbReference>
<dbReference type="PRINTS" id="PR01101">
    <property type="entry name" value="5HTRECEPTOR"/>
</dbReference>
<dbReference type="PRINTS" id="PR00237">
    <property type="entry name" value="GPCRRHODOPSN"/>
</dbReference>
<dbReference type="SUPFAM" id="SSF81321">
    <property type="entry name" value="Family A G protein-coupled receptor-like"/>
    <property type="match status" value="1"/>
</dbReference>
<dbReference type="PROSITE" id="PS00237">
    <property type="entry name" value="G_PROTEIN_RECEP_F1_1"/>
    <property type="match status" value="1"/>
</dbReference>
<dbReference type="PROSITE" id="PS50262">
    <property type="entry name" value="G_PROTEIN_RECEP_F1_2"/>
    <property type="match status" value="1"/>
</dbReference>
<proteinExistence type="evidence at transcript level"/>
<protein>
    <recommendedName>
        <fullName evidence="6">5-hydroxytryptamine receptor 5A</fullName>
        <shortName evidence="5">5-HT-5A</shortName>
        <shortName evidence="5">5-HT5A</shortName>
    </recommendedName>
    <alternativeName>
        <fullName evidence="5">REC17</fullName>
    </alternativeName>
    <alternativeName>
        <fullName evidence="5">Serotonin receptor 5A</fullName>
    </alternativeName>
</protein>
<sequence>MDLPINLTSFSLSTPSTLEPNRSLDTEALRTSQSFLSAFRVLVLTLLGFLAAATFTWNLLVLATILRVRTFHRVPHNLVASMAISDVLVAVLVMPLSLVHELSGRRWQLGRRLCQLWIACDVLCCTASIWNVTAIALDRYWSITRHLEYTLRARKRVSNVMILLTWALSAVISLAPLLFGWGETYSELSEECQVSREPSYTVFSTVGAFYLPLCVVLFVYWKIYKAAKFRMGSRKTNSVSPIPEAVEVKDASQHPQMVFTVRHATVTFQTEGDTWREQKEQRAALMVGILIGVFVLCWFPFFVTELISPLCSWDIPALWKSIFLWLGYSNSFFNPLIYTAFNRSYSSAFKVFFSKQQ</sequence>
<evidence type="ECO:0000250" key="1">
    <source>
        <dbReference type="UniProtKB" id="P47898"/>
    </source>
</evidence>
<evidence type="ECO:0000255" key="2"/>
<evidence type="ECO:0000255" key="3">
    <source>
        <dbReference type="PROSITE-ProRule" id="PRU00521"/>
    </source>
</evidence>
<evidence type="ECO:0000269" key="4">
    <source>
    </source>
</evidence>
<evidence type="ECO:0000303" key="5">
    <source>
    </source>
</evidence>
<evidence type="ECO:0000305" key="6"/>
<evidence type="ECO:0000312" key="7">
    <source>
        <dbReference type="RGD" id="2851"/>
    </source>
</evidence>
<gene>
    <name evidence="7" type="primary">Htr5a</name>
    <name evidence="5" type="synonym">5ht5a</name>
</gene>
<reference key="1">
    <citation type="journal article" date="1993" name="Proc. Natl. Acad. Sci. U.S.A.">
        <title>Two members of a distinct subfamily of 5-hydroxytryptamine receptors differentially expressed in rat brain.</title>
        <authorList>
            <person name="Erlander M.G."/>
            <person name="Lovenberg T.W."/>
            <person name="Baron B.M."/>
            <person name="de Lecea L."/>
            <person name="Danielson P.E."/>
            <person name="Racke M."/>
            <person name="Slone A.L."/>
            <person name="Siegel B.W."/>
            <person name="Foye P.E."/>
            <person name="Cannon K."/>
            <person name="Burns J.E."/>
            <person name="Sutcliffe G.J."/>
        </authorList>
    </citation>
    <scope>NUCLEOTIDE SEQUENCE [MRNA]</scope>
    <scope>TISSUE SPECIFICITY</scope>
    <source>
        <strain>Sprague-Dawley</strain>
        <tissue>Brain</tissue>
    </source>
</reference>